<comment type="function">
    <text evidence="1">Involved in peptide bond synthesis. Alleviates ribosome stalling that occurs when 3 or more consecutive Pro residues or the sequence PPG is present in a protein, possibly by augmenting the peptidyl transferase activity of the ribosome. Modification of Lys-34 is required for alleviation.</text>
</comment>
<comment type="pathway">
    <text evidence="1">Protein biosynthesis; polypeptide chain elongation.</text>
</comment>
<comment type="subcellular location">
    <subcellularLocation>
        <location evidence="1">Cytoplasm</location>
    </subcellularLocation>
</comment>
<comment type="PTM">
    <text evidence="1">May be beta-lysylated on the epsilon-amino group of Lys-34 by the combined action of EpmA and EpmB, and then hydroxylated on the C5 position of the same residue by EpmC (if this protein is present). Lysylation is critical for the stimulatory effect of EF-P on peptide-bond formation. The lysylation moiety may extend toward the peptidyltransferase center and stabilize the terminal 3-CCA end of the tRNA. Hydroxylation of the C5 position on Lys-34 may allow additional potential stabilizing hydrogen-bond interactions with the P-tRNA.</text>
</comment>
<comment type="similarity">
    <text evidence="1">Belongs to the elongation factor P family.</text>
</comment>
<protein>
    <recommendedName>
        <fullName evidence="1">Elongation factor P</fullName>
        <shortName evidence="1">EF-P</shortName>
    </recommendedName>
</protein>
<proteinExistence type="inferred from homology"/>
<feature type="chain" id="PRO_0000094377" description="Elongation factor P">
    <location>
        <begin position="1"/>
        <end position="188"/>
    </location>
</feature>
<feature type="modified residue" description="N6-(3,6-diaminohexanoyl)-5-hydroxylysine" evidence="1">
    <location>
        <position position="34"/>
    </location>
</feature>
<sequence length="188" mass="20711">MASYYSNDFRPGLKIMFEGEPYAVESSEFVKPGKGQAFARVKMRRLLTGGRVEKTFKSTDSLEGADVNDMNLTYLYNDGEFWHFMNNETYEQLQADAKAVGDNGKWLIDQAECIVTLWNGQPIAVTPPNFVELEIVDTDPGLKGDTAGTGGKPATLSTGAVVKVPLFVQVGEIIKVDTRSGEYVSRVK</sequence>
<evidence type="ECO:0000255" key="1">
    <source>
        <dbReference type="HAMAP-Rule" id="MF_00141"/>
    </source>
</evidence>
<keyword id="KW-0963">Cytoplasm</keyword>
<keyword id="KW-0251">Elongation factor</keyword>
<keyword id="KW-0379">Hydroxylation</keyword>
<keyword id="KW-0648">Protein biosynthesis</keyword>
<name>EFP_YERPS</name>
<reference key="1">
    <citation type="journal article" date="2004" name="Proc. Natl. Acad. Sci. U.S.A.">
        <title>Insights into the evolution of Yersinia pestis through whole-genome comparison with Yersinia pseudotuberculosis.</title>
        <authorList>
            <person name="Chain P.S.G."/>
            <person name="Carniel E."/>
            <person name="Larimer F.W."/>
            <person name="Lamerdin J."/>
            <person name="Stoutland P.O."/>
            <person name="Regala W.M."/>
            <person name="Georgescu A.M."/>
            <person name="Vergez L.M."/>
            <person name="Land M.L."/>
            <person name="Motin V.L."/>
            <person name="Brubaker R.R."/>
            <person name="Fowler J."/>
            <person name="Hinnebusch J."/>
            <person name="Marceau M."/>
            <person name="Medigue C."/>
            <person name="Simonet M."/>
            <person name="Chenal-Francisque V."/>
            <person name="Souza B."/>
            <person name="Dacheux D."/>
            <person name="Elliott J.M."/>
            <person name="Derbise A."/>
            <person name="Hauser L.J."/>
            <person name="Garcia E."/>
        </authorList>
    </citation>
    <scope>NUCLEOTIDE SEQUENCE [LARGE SCALE GENOMIC DNA]</scope>
    <source>
        <strain>IP32953</strain>
    </source>
</reference>
<accession>Q66FD2</accession>
<gene>
    <name evidence="1" type="primary">efp</name>
    <name type="ordered locus">YPTB0408</name>
</gene>
<dbReference type="EMBL" id="BX936398">
    <property type="protein sequence ID" value="CAH19648.1"/>
    <property type="molecule type" value="Genomic_DNA"/>
</dbReference>
<dbReference type="RefSeq" id="WP_002209131.1">
    <property type="nucleotide sequence ID" value="NZ_CP009712.1"/>
</dbReference>
<dbReference type="SMR" id="Q66FD2"/>
<dbReference type="GeneID" id="57974254"/>
<dbReference type="KEGG" id="ypo:BZ17_2161"/>
<dbReference type="KEGG" id="yps:YPTB0408"/>
<dbReference type="PATRIC" id="fig|273123.14.peg.2286"/>
<dbReference type="UniPathway" id="UPA00345"/>
<dbReference type="Proteomes" id="UP000001011">
    <property type="component" value="Chromosome"/>
</dbReference>
<dbReference type="GO" id="GO:0005737">
    <property type="term" value="C:cytoplasm"/>
    <property type="evidence" value="ECO:0007669"/>
    <property type="project" value="UniProtKB-SubCell"/>
</dbReference>
<dbReference type="GO" id="GO:0003746">
    <property type="term" value="F:translation elongation factor activity"/>
    <property type="evidence" value="ECO:0007669"/>
    <property type="project" value="UniProtKB-UniRule"/>
</dbReference>
<dbReference type="GO" id="GO:0043043">
    <property type="term" value="P:peptide biosynthetic process"/>
    <property type="evidence" value="ECO:0007669"/>
    <property type="project" value="InterPro"/>
</dbReference>
<dbReference type="CDD" id="cd04470">
    <property type="entry name" value="S1_EF-P_repeat_1"/>
    <property type="match status" value="1"/>
</dbReference>
<dbReference type="CDD" id="cd05794">
    <property type="entry name" value="S1_EF-P_repeat_2"/>
    <property type="match status" value="1"/>
</dbReference>
<dbReference type="FunFam" id="2.30.30.30:FF:000003">
    <property type="entry name" value="Elongation factor P"/>
    <property type="match status" value="1"/>
</dbReference>
<dbReference type="FunFam" id="2.40.50.140:FF:000004">
    <property type="entry name" value="Elongation factor P"/>
    <property type="match status" value="1"/>
</dbReference>
<dbReference type="FunFam" id="2.40.50.140:FF:000009">
    <property type="entry name" value="Elongation factor P"/>
    <property type="match status" value="1"/>
</dbReference>
<dbReference type="Gene3D" id="2.30.30.30">
    <property type="match status" value="1"/>
</dbReference>
<dbReference type="Gene3D" id="2.40.50.140">
    <property type="entry name" value="Nucleic acid-binding proteins"/>
    <property type="match status" value="2"/>
</dbReference>
<dbReference type="HAMAP" id="MF_00141">
    <property type="entry name" value="EF_P"/>
    <property type="match status" value="1"/>
</dbReference>
<dbReference type="InterPro" id="IPR015365">
    <property type="entry name" value="Elong-fact-P_C"/>
</dbReference>
<dbReference type="InterPro" id="IPR012340">
    <property type="entry name" value="NA-bd_OB-fold"/>
</dbReference>
<dbReference type="InterPro" id="IPR014722">
    <property type="entry name" value="Rib_uL2_dom2"/>
</dbReference>
<dbReference type="InterPro" id="IPR020599">
    <property type="entry name" value="Transl_elong_fac_P/YeiP"/>
</dbReference>
<dbReference type="InterPro" id="IPR013185">
    <property type="entry name" value="Transl_elong_KOW-like"/>
</dbReference>
<dbReference type="InterPro" id="IPR001059">
    <property type="entry name" value="Transl_elong_P/YeiP_cen"/>
</dbReference>
<dbReference type="InterPro" id="IPR013852">
    <property type="entry name" value="Transl_elong_P/YeiP_CS"/>
</dbReference>
<dbReference type="InterPro" id="IPR011768">
    <property type="entry name" value="Transl_elongation_fac_P"/>
</dbReference>
<dbReference type="InterPro" id="IPR008991">
    <property type="entry name" value="Translation_prot_SH3-like_sf"/>
</dbReference>
<dbReference type="NCBIfam" id="TIGR00038">
    <property type="entry name" value="efp"/>
    <property type="match status" value="1"/>
</dbReference>
<dbReference type="NCBIfam" id="NF001810">
    <property type="entry name" value="PRK00529.1"/>
    <property type="match status" value="1"/>
</dbReference>
<dbReference type="PANTHER" id="PTHR30053">
    <property type="entry name" value="ELONGATION FACTOR P"/>
    <property type="match status" value="1"/>
</dbReference>
<dbReference type="PANTHER" id="PTHR30053:SF12">
    <property type="entry name" value="ELONGATION FACTOR P (EF-P) FAMILY PROTEIN"/>
    <property type="match status" value="1"/>
</dbReference>
<dbReference type="Pfam" id="PF01132">
    <property type="entry name" value="EFP"/>
    <property type="match status" value="1"/>
</dbReference>
<dbReference type="Pfam" id="PF08207">
    <property type="entry name" value="EFP_N"/>
    <property type="match status" value="1"/>
</dbReference>
<dbReference type="Pfam" id="PF09285">
    <property type="entry name" value="Elong-fact-P_C"/>
    <property type="match status" value="1"/>
</dbReference>
<dbReference type="PIRSF" id="PIRSF005901">
    <property type="entry name" value="EF-P"/>
    <property type="match status" value="1"/>
</dbReference>
<dbReference type="SMART" id="SM01185">
    <property type="entry name" value="EFP"/>
    <property type="match status" value="1"/>
</dbReference>
<dbReference type="SMART" id="SM00841">
    <property type="entry name" value="Elong-fact-P_C"/>
    <property type="match status" value="1"/>
</dbReference>
<dbReference type="SUPFAM" id="SSF50249">
    <property type="entry name" value="Nucleic acid-binding proteins"/>
    <property type="match status" value="2"/>
</dbReference>
<dbReference type="SUPFAM" id="SSF50104">
    <property type="entry name" value="Translation proteins SH3-like domain"/>
    <property type="match status" value="1"/>
</dbReference>
<dbReference type="PROSITE" id="PS01275">
    <property type="entry name" value="EFP"/>
    <property type="match status" value="1"/>
</dbReference>
<organism>
    <name type="scientific">Yersinia pseudotuberculosis serotype I (strain IP32953)</name>
    <dbReference type="NCBI Taxonomy" id="273123"/>
    <lineage>
        <taxon>Bacteria</taxon>
        <taxon>Pseudomonadati</taxon>
        <taxon>Pseudomonadota</taxon>
        <taxon>Gammaproteobacteria</taxon>
        <taxon>Enterobacterales</taxon>
        <taxon>Yersiniaceae</taxon>
        <taxon>Yersinia</taxon>
    </lineage>
</organism>